<dbReference type="EMBL" id="BC089837">
    <property type="protein sequence ID" value="AAH89837.1"/>
    <property type="molecule type" value="mRNA"/>
</dbReference>
<dbReference type="RefSeq" id="NP_001017491.1">
    <property type="nucleotide sequence ID" value="NM_001017491.1"/>
</dbReference>
<dbReference type="RefSeq" id="XP_017454368.1">
    <property type="nucleotide sequence ID" value="XM_017598879.1"/>
</dbReference>
<dbReference type="FunCoup" id="Q5FVQ5">
    <property type="interactions" value="166"/>
</dbReference>
<dbReference type="STRING" id="10116.ENSRNOP00000032707"/>
<dbReference type="iPTMnet" id="Q5FVQ5"/>
<dbReference type="PhosphoSitePlus" id="Q5FVQ5"/>
<dbReference type="PaxDb" id="10116-ENSRNOP00000032707"/>
<dbReference type="Ensembl" id="ENSRNOT00000029533.6">
    <property type="protein sequence ID" value="ENSRNOP00000032707.4"/>
    <property type="gene ID" value="ENSRNOG00000028250.6"/>
</dbReference>
<dbReference type="GeneID" id="498232"/>
<dbReference type="KEGG" id="rno:498232"/>
<dbReference type="UCSC" id="RGD:1563522">
    <property type="organism name" value="rat"/>
</dbReference>
<dbReference type="AGR" id="RGD:1563522"/>
<dbReference type="CTD" id="54900"/>
<dbReference type="RGD" id="1563522">
    <property type="gene designation" value="Lax1"/>
</dbReference>
<dbReference type="eggNOG" id="ENOG502SP30">
    <property type="taxonomic scope" value="Eukaryota"/>
</dbReference>
<dbReference type="GeneTree" id="ENSGT00390000014063"/>
<dbReference type="HOGENOM" id="CLU_058345_0_0_1"/>
<dbReference type="InParanoid" id="Q5FVQ5"/>
<dbReference type="OMA" id="RDYINVP"/>
<dbReference type="OrthoDB" id="9449526at2759"/>
<dbReference type="PhylomeDB" id="Q5FVQ5"/>
<dbReference type="TreeFam" id="TF337411"/>
<dbReference type="PRO" id="PR:Q5FVQ5"/>
<dbReference type="Proteomes" id="UP000002494">
    <property type="component" value="Chromosome 13"/>
</dbReference>
<dbReference type="Bgee" id="ENSRNOG00000028250">
    <property type="expression patterns" value="Expressed in spleen and 10 other cell types or tissues"/>
</dbReference>
<dbReference type="GO" id="GO:0016020">
    <property type="term" value="C:membrane"/>
    <property type="evidence" value="ECO:0000266"/>
    <property type="project" value="RGD"/>
</dbReference>
<dbReference type="GO" id="GO:0005886">
    <property type="term" value="C:plasma membrane"/>
    <property type="evidence" value="ECO:0000318"/>
    <property type="project" value="GO_Central"/>
</dbReference>
<dbReference type="GO" id="GO:0019901">
    <property type="term" value="F:protein kinase binding"/>
    <property type="evidence" value="ECO:0000266"/>
    <property type="project" value="RGD"/>
</dbReference>
<dbReference type="GO" id="GO:0042169">
    <property type="term" value="F:SH2 domain binding"/>
    <property type="evidence" value="ECO:0000266"/>
    <property type="project" value="RGD"/>
</dbReference>
<dbReference type="GO" id="GO:0002250">
    <property type="term" value="P:adaptive immune response"/>
    <property type="evidence" value="ECO:0007669"/>
    <property type="project" value="UniProtKB-KW"/>
</dbReference>
<dbReference type="GO" id="GO:0050851">
    <property type="term" value="P:antigen receptor-mediated signaling pathway"/>
    <property type="evidence" value="ECO:0000266"/>
    <property type="project" value="RGD"/>
</dbReference>
<dbReference type="GO" id="GO:0042113">
    <property type="term" value="P:B cell activation"/>
    <property type="evidence" value="ECO:0000266"/>
    <property type="project" value="RGD"/>
</dbReference>
<dbReference type="GO" id="GO:0006955">
    <property type="term" value="P:immune response"/>
    <property type="evidence" value="ECO:0000266"/>
    <property type="project" value="RGD"/>
</dbReference>
<dbReference type="GO" id="GO:0035556">
    <property type="term" value="P:intracellular signal transduction"/>
    <property type="evidence" value="ECO:0000266"/>
    <property type="project" value="RGD"/>
</dbReference>
<dbReference type="GO" id="GO:0046649">
    <property type="term" value="P:lymphocyte activation"/>
    <property type="evidence" value="ECO:0000266"/>
    <property type="project" value="RGD"/>
</dbReference>
<dbReference type="GO" id="GO:0043409">
    <property type="term" value="P:negative regulation of MAPK cascade"/>
    <property type="evidence" value="ECO:0000266"/>
    <property type="project" value="RGD"/>
</dbReference>
<dbReference type="GO" id="GO:0050868">
    <property type="term" value="P:negative regulation of T cell activation"/>
    <property type="evidence" value="ECO:0000266"/>
    <property type="project" value="RGD"/>
</dbReference>
<dbReference type="InterPro" id="IPR031393">
    <property type="entry name" value="LAX"/>
</dbReference>
<dbReference type="PANTHER" id="PTHR24091">
    <property type="entry name" value="LYMPHOCYTE TRANSMEMBRANE ADAPTER 1"/>
    <property type="match status" value="1"/>
</dbReference>
<dbReference type="PANTHER" id="PTHR24091:SF0">
    <property type="entry name" value="LYMPHOCYTE TRANSMEMBRANE ADAPTER 1"/>
    <property type="match status" value="1"/>
</dbReference>
<dbReference type="Pfam" id="PF15681">
    <property type="entry name" value="LAX"/>
    <property type="match status" value="1"/>
</dbReference>
<keyword id="KW-1064">Adaptive immunity</keyword>
<keyword id="KW-1003">Cell membrane</keyword>
<keyword id="KW-0391">Immunity</keyword>
<keyword id="KW-0472">Membrane</keyword>
<keyword id="KW-0597">Phosphoprotein</keyword>
<keyword id="KW-1185">Reference proteome</keyword>
<keyword id="KW-0735">Signal-anchor</keyword>
<keyword id="KW-0812">Transmembrane</keyword>
<keyword id="KW-1133">Transmembrane helix</keyword>
<name>LAX1_RAT</name>
<gene>
    <name type="primary">Lax1</name>
    <name type="synonym">Lax</name>
</gene>
<proteinExistence type="evidence at transcript level"/>
<evidence type="ECO:0000250" key="1"/>
<evidence type="ECO:0000250" key="2">
    <source>
        <dbReference type="UniProtKB" id="Q8IWV1"/>
    </source>
</evidence>
<evidence type="ECO:0000255" key="3"/>
<evidence type="ECO:0000256" key="4">
    <source>
        <dbReference type="SAM" id="MobiDB-lite"/>
    </source>
</evidence>
<reference key="1">
    <citation type="journal article" date="2004" name="Genome Res.">
        <title>The status, quality, and expansion of the NIH full-length cDNA project: the Mammalian Gene Collection (MGC).</title>
        <authorList>
            <consortium name="The MGC Project Team"/>
        </authorList>
    </citation>
    <scope>NUCLEOTIDE SEQUENCE [LARGE SCALE MRNA]</scope>
    <source>
        <tissue>Spleen</tissue>
    </source>
</reference>
<sequence length="406" mass="43936">MYTTPAPPEITRRSSEPSTQQGTLGSLEGEKGHLLFPGFVVLVTIFLVVIVTCILWSRKKQKKRRVPYLQVTPSLALPPPRQRAKNIYDFLPRQQTELGRHQLSGFSTESLLSRASDSPEPEVPQASGSLQKHRASVHAVEYTVGVYDNGTVAQMCGPLASSAHRVCDGTSRNNSISSKESNDYVNIPTAEDTSETLTCTKSTPESHLGLPSGQRLEFAEGGHAGCGKATDRTGVWAPGLQGSNSLSEGDDSSQSSNDYVNMTGLDLEDIQESRPRVAFQCCRDYENVPPVVANGSQLQTVEEVTSSTTDRGEPAQRTLPSVYHMAFRPSAWSEDGAMIPGEEASNGDSSDYENVLVPELEGKDWKQGPGTWHPSDERTPSDQAGKFCEAVYPAGSLATETSGEEV</sequence>
<comment type="function">
    <text evidence="1">Negatively regulates TCR (T-cell antigen receptor)-mediated signaling in T-cells and BCR (B-cell antigen receptor)-mediated signaling in B-cells.</text>
</comment>
<comment type="subunit">
    <text evidence="1">When phosphorylated, interacts with GRB2, PIK3R1 and GRAP2.</text>
</comment>
<comment type="subcellular location">
    <subcellularLocation>
        <location evidence="1">Cell membrane</location>
        <topology evidence="1">Single-pass type III membrane protein</topology>
    </subcellularLocation>
</comment>
<comment type="PTM">
    <text evidence="1">Phosphorylated on tyrosines upon TCR or BCR activation; which leads to the recruitment of GRB2, PIK3R1 and GRAP2.</text>
</comment>
<protein>
    <recommendedName>
        <fullName>Lymphocyte transmembrane adapter 1</fullName>
    </recommendedName>
    <alternativeName>
        <fullName>Membrane-associated adapter protein LAX</fullName>
    </alternativeName>
</protein>
<organism>
    <name type="scientific">Rattus norvegicus</name>
    <name type="common">Rat</name>
    <dbReference type="NCBI Taxonomy" id="10116"/>
    <lineage>
        <taxon>Eukaryota</taxon>
        <taxon>Metazoa</taxon>
        <taxon>Chordata</taxon>
        <taxon>Craniata</taxon>
        <taxon>Vertebrata</taxon>
        <taxon>Euteleostomi</taxon>
        <taxon>Mammalia</taxon>
        <taxon>Eutheria</taxon>
        <taxon>Euarchontoglires</taxon>
        <taxon>Glires</taxon>
        <taxon>Rodentia</taxon>
        <taxon>Myomorpha</taxon>
        <taxon>Muroidea</taxon>
        <taxon>Muridae</taxon>
        <taxon>Murinae</taxon>
        <taxon>Rattus</taxon>
    </lineage>
</organism>
<feature type="chain" id="PRO_0000083331" description="Lymphocyte transmembrane adapter 1">
    <location>
        <begin position="1"/>
        <end position="406"/>
    </location>
</feature>
<feature type="topological domain" description="Extracellular" evidence="3">
    <location>
        <begin position="1"/>
        <end position="33"/>
    </location>
</feature>
<feature type="transmembrane region" description="Helical; Signal-anchor for type III membrane protein" evidence="3">
    <location>
        <begin position="34"/>
        <end position="54"/>
    </location>
</feature>
<feature type="topological domain" description="Cytoplasmic" evidence="3">
    <location>
        <begin position="55"/>
        <end position="406"/>
    </location>
</feature>
<feature type="region of interest" description="Disordered" evidence="4">
    <location>
        <begin position="1"/>
        <end position="25"/>
    </location>
</feature>
<feature type="region of interest" description="Disordered" evidence="4">
    <location>
        <begin position="109"/>
        <end position="131"/>
    </location>
</feature>
<feature type="region of interest" description="Disordered" evidence="4">
    <location>
        <begin position="219"/>
        <end position="258"/>
    </location>
</feature>
<feature type="region of interest" description="Disordered" evidence="4">
    <location>
        <begin position="358"/>
        <end position="406"/>
    </location>
</feature>
<feature type="compositionally biased region" description="Low complexity" evidence="4">
    <location>
        <begin position="242"/>
        <end position="258"/>
    </location>
</feature>
<feature type="modified residue" description="Phosphotyrosine" evidence="2">
    <location>
        <position position="184"/>
    </location>
</feature>
<feature type="modified residue" description="Phosphotyrosine" evidence="2">
    <location>
        <position position="259"/>
    </location>
</feature>
<feature type="modified residue" description="Phosphotyrosine" evidence="2">
    <location>
        <position position="285"/>
    </location>
</feature>
<feature type="modified residue" description="Phosphotyrosine" evidence="2">
    <location>
        <position position="352"/>
    </location>
</feature>
<accession>Q5FVQ5</accession>